<keyword id="KW-0963">Cytoplasm</keyword>
<keyword id="KW-0240">DNA-directed RNA polymerase</keyword>
<keyword id="KW-0479">Metal-binding</keyword>
<keyword id="KW-0548">Nucleotidyltransferase</keyword>
<keyword id="KW-0804">Transcription</keyword>
<keyword id="KW-0808">Transferase</keyword>
<keyword id="KW-0862">Zinc</keyword>
<reference key="1">
    <citation type="journal article" date="2009" name="Proc. Natl. Acad. Sci. U.S.A.">
        <title>Biogeography of the Sulfolobus islandicus pan-genome.</title>
        <authorList>
            <person name="Reno M.L."/>
            <person name="Held N.L."/>
            <person name="Fields C.J."/>
            <person name="Burke P.V."/>
            <person name="Whitaker R.J."/>
        </authorList>
    </citation>
    <scope>NUCLEOTIDE SEQUENCE [LARGE SCALE GENOMIC DNA]</scope>
    <source>
        <strain>M.16.4 / Kamchatka #3</strain>
    </source>
</reference>
<organism>
    <name type="scientific">Saccharolobus islandicus (strain M.16.4 / Kamchatka #3)</name>
    <name type="common">Sulfolobus islandicus</name>
    <dbReference type="NCBI Taxonomy" id="426118"/>
    <lineage>
        <taxon>Archaea</taxon>
        <taxon>Thermoproteota</taxon>
        <taxon>Thermoprotei</taxon>
        <taxon>Sulfolobales</taxon>
        <taxon>Sulfolobaceae</taxon>
        <taxon>Saccharolobus</taxon>
    </lineage>
</organism>
<dbReference type="EC" id="2.7.7.6" evidence="1"/>
<dbReference type="EMBL" id="CP001402">
    <property type="protein sequence ID" value="ACR42312.1"/>
    <property type="molecule type" value="Genomic_DNA"/>
</dbReference>
<dbReference type="RefSeq" id="WP_009988725.1">
    <property type="nucleotide sequence ID" value="NC_012726.1"/>
</dbReference>
<dbReference type="SMR" id="C4KI98"/>
<dbReference type="KEGG" id="sid:M164_1708"/>
<dbReference type="HOGENOM" id="CLU_179456_2_0_2"/>
<dbReference type="Proteomes" id="UP000001479">
    <property type="component" value="Chromosome"/>
</dbReference>
<dbReference type="GO" id="GO:0005737">
    <property type="term" value="C:cytoplasm"/>
    <property type="evidence" value="ECO:0007669"/>
    <property type="project" value="UniProtKB-SubCell"/>
</dbReference>
<dbReference type="GO" id="GO:0000428">
    <property type="term" value="C:DNA-directed RNA polymerase complex"/>
    <property type="evidence" value="ECO:0007669"/>
    <property type="project" value="UniProtKB-KW"/>
</dbReference>
<dbReference type="GO" id="GO:0003677">
    <property type="term" value="F:DNA binding"/>
    <property type="evidence" value="ECO:0007669"/>
    <property type="project" value="InterPro"/>
</dbReference>
<dbReference type="GO" id="GO:0003899">
    <property type="term" value="F:DNA-directed RNA polymerase activity"/>
    <property type="evidence" value="ECO:0007669"/>
    <property type="project" value="UniProtKB-UniRule"/>
</dbReference>
<dbReference type="GO" id="GO:0008270">
    <property type="term" value="F:zinc ion binding"/>
    <property type="evidence" value="ECO:0007669"/>
    <property type="project" value="UniProtKB-UniRule"/>
</dbReference>
<dbReference type="GO" id="GO:0006351">
    <property type="term" value="P:DNA-templated transcription"/>
    <property type="evidence" value="ECO:0007669"/>
    <property type="project" value="UniProtKB-UniRule"/>
</dbReference>
<dbReference type="Gene3D" id="2.20.28.30">
    <property type="entry name" value="RNA polymerase ii, chain L"/>
    <property type="match status" value="1"/>
</dbReference>
<dbReference type="HAMAP" id="MF_00615">
    <property type="entry name" value="RNApol_arch_Rpo12"/>
    <property type="match status" value="1"/>
</dbReference>
<dbReference type="InterPro" id="IPR006591">
    <property type="entry name" value="RNAP_P/RPABC4"/>
</dbReference>
<dbReference type="InterPro" id="IPR029040">
    <property type="entry name" value="RPABC4/Spt4"/>
</dbReference>
<dbReference type="InterPro" id="IPR023464">
    <property type="entry name" value="Rpo12"/>
</dbReference>
<dbReference type="NCBIfam" id="NF001604">
    <property type="entry name" value="PRK00398.1-1"/>
    <property type="match status" value="1"/>
</dbReference>
<dbReference type="SMART" id="SM00659">
    <property type="entry name" value="RPOLCX"/>
    <property type="match status" value="1"/>
</dbReference>
<dbReference type="SUPFAM" id="SSF63393">
    <property type="entry name" value="RNA polymerase subunits"/>
    <property type="match status" value="1"/>
</dbReference>
<protein>
    <recommendedName>
        <fullName evidence="1">DNA-directed RNA polymerase subunit Rpo12</fullName>
        <ecNumber evidence="1">2.7.7.6</ecNumber>
    </recommendedName>
    <alternativeName>
        <fullName evidence="1">DNA-directed RNA polymerase subunit P</fullName>
    </alternativeName>
</protein>
<feature type="chain" id="PRO_1000212274" description="DNA-directed RNA polymerase subunit Rpo12">
    <location>
        <begin position="1"/>
        <end position="48"/>
    </location>
</feature>
<feature type="binding site" evidence="1">
    <location>
        <position position="9"/>
    </location>
    <ligand>
        <name>Zn(2+)</name>
        <dbReference type="ChEBI" id="CHEBI:29105"/>
    </ligand>
</feature>
<feature type="binding site" evidence="1">
    <location>
        <position position="26"/>
    </location>
    <ligand>
        <name>Zn(2+)</name>
        <dbReference type="ChEBI" id="CHEBI:29105"/>
    </ligand>
</feature>
<feature type="binding site" evidence="1">
    <location>
        <position position="29"/>
    </location>
    <ligand>
        <name>Zn(2+)</name>
        <dbReference type="ChEBI" id="CHEBI:29105"/>
    </ligand>
</feature>
<gene>
    <name evidence="1" type="primary">rpo12</name>
    <name evidence="1" type="synonym">rpoP</name>
    <name type="ordered locus">M164_1708</name>
</gene>
<name>RPO12_SACI6</name>
<accession>C4KI98</accession>
<sequence>MAVYRCGKCWKTFTDEQLKVLPGVRCPYCGYKIIFMVRKPTIKIVKAI</sequence>
<evidence type="ECO:0000255" key="1">
    <source>
        <dbReference type="HAMAP-Rule" id="MF_00615"/>
    </source>
</evidence>
<comment type="function">
    <text evidence="1">DNA-dependent RNA polymerase (RNAP) catalyzes the transcription of DNA into RNA using the four ribonucleoside triphosphates as substrates.</text>
</comment>
<comment type="catalytic activity">
    <reaction evidence="1">
        <text>RNA(n) + a ribonucleoside 5'-triphosphate = RNA(n+1) + diphosphate</text>
        <dbReference type="Rhea" id="RHEA:21248"/>
        <dbReference type="Rhea" id="RHEA-COMP:14527"/>
        <dbReference type="Rhea" id="RHEA-COMP:17342"/>
        <dbReference type="ChEBI" id="CHEBI:33019"/>
        <dbReference type="ChEBI" id="CHEBI:61557"/>
        <dbReference type="ChEBI" id="CHEBI:140395"/>
        <dbReference type="EC" id="2.7.7.6"/>
    </reaction>
</comment>
<comment type="cofactor">
    <cofactor evidence="1">
        <name>Zn(2+)</name>
        <dbReference type="ChEBI" id="CHEBI:29105"/>
    </cofactor>
    <text evidence="1">Binds 1 zinc ion.</text>
</comment>
<comment type="subunit">
    <text evidence="1">Part of the RNA polymerase complex.</text>
</comment>
<comment type="subcellular location">
    <subcellularLocation>
        <location evidence="1">Cytoplasm</location>
    </subcellularLocation>
</comment>
<comment type="similarity">
    <text evidence="1">Belongs to the archaeal Rpo12/eukaryotic RPC10 RNA polymerase subunit family.</text>
</comment>
<proteinExistence type="inferred from homology"/>